<accession>Q8Y4R7</accession>
<sequence length="450" mass="49896">MTHIKFDYSKALRFFEERELDYLEPAVKAAHDSLHNGTGAGNDALGWINLPTDYDKEEFARIKKATEKIHSDSDVLIVIGIGGSYLGARAAIETLNHSFYNVLEKGARKTPQVFFAGNSISSSYLHDLIEVVGDRDFSVNVISKSGTTTEPAIAFRVFKELLIKKYGEEGAKKRIYATTDKAKGALKTLSDNEGYETFVVPDDVGGRFSVLTAVGLLPIAVSGVDIDALMNGAAAASKDFDKPELKNNIAYQYAAARNVLYRKGKVTELLISYEPGLQYFNEWWKQLFGESEGKDKKGIYPSSANFSTDLHSIGQYIQDGRRNLFETVIKVDKPRHNLTINKEDVDLDGLNYLAGETVDFVNTKAFEGTLLAHTDGEVPNFVVEVPELDAYTFGYLVYFFEKAVAISGYLNGVNPFDQPGVEAYKANMFALLGKPGFEDKKAELEKRLND</sequence>
<comment type="function">
    <text evidence="1">Catalyzes the reversible isomerization of glucose-6-phosphate to fructose-6-phosphate.</text>
</comment>
<comment type="catalytic activity">
    <reaction evidence="1">
        <text>alpha-D-glucose 6-phosphate = beta-D-fructose 6-phosphate</text>
        <dbReference type="Rhea" id="RHEA:11816"/>
        <dbReference type="ChEBI" id="CHEBI:57634"/>
        <dbReference type="ChEBI" id="CHEBI:58225"/>
        <dbReference type="EC" id="5.3.1.9"/>
    </reaction>
</comment>
<comment type="pathway">
    <text evidence="1">Carbohydrate biosynthesis; gluconeogenesis.</text>
</comment>
<comment type="pathway">
    <text evidence="1">Carbohydrate degradation; glycolysis; D-glyceraldehyde 3-phosphate and glycerone phosphate from D-glucose: step 2/4.</text>
</comment>
<comment type="subcellular location">
    <subcellularLocation>
        <location evidence="1">Cytoplasm</location>
    </subcellularLocation>
</comment>
<comment type="similarity">
    <text evidence="1">Belongs to the GPI family.</text>
</comment>
<organism>
    <name type="scientific">Listeria monocytogenes serovar 1/2a (strain ATCC BAA-679 / EGD-e)</name>
    <dbReference type="NCBI Taxonomy" id="169963"/>
    <lineage>
        <taxon>Bacteria</taxon>
        <taxon>Bacillati</taxon>
        <taxon>Bacillota</taxon>
        <taxon>Bacilli</taxon>
        <taxon>Bacillales</taxon>
        <taxon>Listeriaceae</taxon>
        <taxon>Listeria</taxon>
    </lineage>
</organism>
<keyword id="KW-0963">Cytoplasm</keyword>
<keyword id="KW-0312">Gluconeogenesis</keyword>
<keyword id="KW-0324">Glycolysis</keyword>
<keyword id="KW-0413">Isomerase</keyword>
<keyword id="KW-1185">Reference proteome</keyword>
<gene>
    <name evidence="1" type="primary">pgi</name>
    <name type="ordered locus">lmo2367</name>
</gene>
<feature type="chain" id="PRO_0000180668" description="Glucose-6-phosphate isomerase">
    <location>
        <begin position="1"/>
        <end position="450"/>
    </location>
</feature>
<feature type="active site" description="Proton donor" evidence="1">
    <location>
        <position position="290"/>
    </location>
</feature>
<feature type="active site" evidence="1">
    <location>
        <position position="311"/>
    </location>
</feature>
<feature type="active site" evidence="1">
    <location>
        <position position="425"/>
    </location>
</feature>
<proteinExistence type="inferred from homology"/>
<evidence type="ECO:0000255" key="1">
    <source>
        <dbReference type="HAMAP-Rule" id="MF_00473"/>
    </source>
</evidence>
<dbReference type="EC" id="5.3.1.9" evidence="1"/>
<dbReference type="EMBL" id="AL591983">
    <property type="protein sequence ID" value="CAD00445.1"/>
    <property type="molecule type" value="Genomic_DNA"/>
</dbReference>
<dbReference type="PIR" id="AG1370">
    <property type="entry name" value="AG1370"/>
</dbReference>
<dbReference type="RefSeq" id="NP_465890.1">
    <property type="nucleotide sequence ID" value="NC_003210.1"/>
</dbReference>
<dbReference type="RefSeq" id="WP_003722393.1">
    <property type="nucleotide sequence ID" value="NZ_CP149495.1"/>
</dbReference>
<dbReference type="SMR" id="Q8Y4R7"/>
<dbReference type="STRING" id="169963.gene:17595077"/>
<dbReference type="PaxDb" id="169963-lmo2367"/>
<dbReference type="EnsemblBacteria" id="CAD00445">
    <property type="protein sequence ID" value="CAD00445"/>
    <property type="gene ID" value="CAD00445"/>
</dbReference>
<dbReference type="GeneID" id="984404"/>
<dbReference type="KEGG" id="lmo:lmo2367"/>
<dbReference type="PATRIC" id="fig|169963.11.peg.2425"/>
<dbReference type="eggNOG" id="COG0166">
    <property type="taxonomic scope" value="Bacteria"/>
</dbReference>
<dbReference type="HOGENOM" id="CLU_037303_0_1_9"/>
<dbReference type="OrthoDB" id="140919at2"/>
<dbReference type="PhylomeDB" id="Q8Y4R7"/>
<dbReference type="BioCyc" id="LMON169963:LMO2367-MONOMER"/>
<dbReference type="UniPathway" id="UPA00109">
    <property type="reaction ID" value="UER00181"/>
</dbReference>
<dbReference type="UniPathway" id="UPA00138"/>
<dbReference type="Proteomes" id="UP000000817">
    <property type="component" value="Chromosome"/>
</dbReference>
<dbReference type="GO" id="GO:0005829">
    <property type="term" value="C:cytosol"/>
    <property type="evidence" value="ECO:0000318"/>
    <property type="project" value="GO_Central"/>
</dbReference>
<dbReference type="GO" id="GO:0097367">
    <property type="term" value="F:carbohydrate derivative binding"/>
    <property type="evidence" value="ECO:0007669"/>
    <property type="project" value="InterPro"/>
</dbReference>
<dbReference type="GO" id="GO:0004347">
    <property type="term" value="F:glucose-6-phosphate isomerase activity"/>
    <property type="evidence" value="ECO:0000318"/>
    <property type="project" value="GO_Central"/>
</dbReference>
<dbReference type="GO" id="GO:0048029">
    <property type="term" value="F:monosaccharide binding"/>
    <property type="evidence" value="ECO:0000318"/>
    <property type="project" value="GO_Central"/>
</dbReference>
<dbReference type="GO" id="GO:0006094">
    <property type="term" value="P:gluconeogenesis"/>
    <property type="evidence" value="ECO:0000318"/>
    <property type="project" value="GO_Central"/>
</dbReference>
<dbReference type="GO" id="GO:0051156">
    <property type="term" value="P:glucose 6-phosphate metabolic process"/>
    <property type="evidence" value="ECO:0000318"/>
    <property type="project" value="GO_Central"/>
</dbReference>
<dbReference type="GO" id="GO:0006096">
    <property type="term" value="P:glycolytic process"/>
    <property type="evidence" value="ECO:0000318"/>
    <property type="project" value="GO_Central"/>
</dbReference>
<dbReference type="CDD" id="cd05015">
    <property type="entry name" value="SIS_PGI_1"/>
    <property type="match status" value="1"/>
</dbReference>
<dbReference type="CDD" id="cd05016">
    <property type="entry name" value="SIS_PGI_2"/>
    <property type="match status" value="1"/>
</dbReference>
<dbReference type="FunFam" id="3.40.50.10490:FF:000015">
    <property type="entry name" value="Glucose-6-phosphate isomerase"/>
    <property type="match status" value="1"/>
</dbReference>
<dbReference type="FunFam" id="3.40.50.10490:FF:000016">
    <property type="entry name" value="Glucose-6-phosphate isomerase"/>
    <property type="match status" value="1"/>
</dbReference>
<dbReference type="Gene3D" id="3.40.50.10490">
    <property type="entry name" value="Glucose-6-phosphate isomerase like protein, domain 1"/>
    <property type="match status" value="3"/>
</dbReference>
<dbReference type="HAMAP" id="MF_00473">
    <property type="entry name" value="G6P_isomerase"/>
    <property type="match status" value="1"/>
</dbReference>
<dbReference type="InterPro" id="IPR001672">
    <property type="entry name" value="G6P_Isomerase"/>
</dbReference>
<dbReference type="InterPro" id="IPR018189">
    <property type="entry name" value="Phosphoglucose_isomerase_CS"/>
</dbReference>
<dbReference type="InterPro" id="IPR046348">
    <property type="entry name" value="SIS_dom_sf"/>
</dbReference>
<dbReference type="InterPro" id="IPR035476">
    <property type="entry name" value="SIS_PGI_1"/>
</dbReference>
<dbReference type="InterPro" id="IPR035482">
    <property type="entry name" value="SIS_PGI_2"/>
</dbReference>
<dbReference type="NCBIfam" id="NF010697">
    <property type="entry name" value="PRK14097.1"/>
    <property type="match status" value="1"/>
</dbReference>
<dbReference type="PANTHER" id="PTHR11469">
    <property type="entry name" value="GLUCOSE-6-PHOSPHATE ISOMERASE"/>
    <property type="match status" value="1"/>
</dbReference>
<dbReference type="PANTHER" id="PTHR11469:SF1">
    <property type="entry name" value="GLUCOSE-6-PHOSPHATE ISOMERASE"/>
    <property type="match status" value="1"/>
</dbReference>
<dbReference type="Pfam" id="PF00342">
    <property type="entry name" value="PGI"/>
    <property type="match status" value="1"/>
</dbReference>
<dbReference type="PRINTS" id="PR00662">
    <property type="entry name" value="G6PISOMERASE"/>
</dbReference>
<dbReference type="SUPFAM" id="SSF53697">
    <property type="entry name" value="SIS domain"/>
    <property type="match status" value="1"/>
</dbReference>
<dbReference type="PROSITE" id="PS00765">
    <property type="entry name" value="P_GLUCOSE_ISOMERASE_1"/>
    <property type="match status" value="1"/>
</dbReference>
<dbReference type="PROSITE" id="PS00174">
    <property type="entry name" value="P_GLUCOSE_ISOMERASE_2"/>
    <property type="match status" value="1"/>
</dbReference>
<dbReference type="PROSITE" id="PS51463">
    <property type="entry name" value="P_GLUCOSE_ISOMERASE_3"/>
    <property type="match status" value="1"/>
</dbReference>
<protein>
    <recommendedName>
        <fullName evidence="1">Glucose-6-phosphate isomerase</fullName>
        <shortName evidence="1">GPI</shortName>
        <ecNumber evidence="1">5.3.1.9</ecNumber>
    </recommendedName>
    <alternativeName>
        <fullName evidence="1">Phosphoglucose isomerase</fullName>
        <shortName evidence="1">PGI</shortName>
    </alternativeName>
    <alternativeName>
        <fullName evidence="1">Phosphohexose isomerase</fullName>
        <shortName evidence="1">PHI</shortName>
    </alternativeName>
</protein>
<name>G6PI_LISMO</name>
<reference key="1">
    <citation type="journal article" date="2001" name="Science">
        <title>Comparative genomics of Listeria species.</title>
        <authorList>
            <person name="Glaser P."/>
            <person name="Frangeul L."/>
            <person name="Buchrieser C."/>
            <person name="Rusniok C."/>
            <person name="Amend A."/>
            <person name="Baquero F."/>
            <person name="Berche P."/>
            <person name="Bloecker H."/>
            <person name="Brandt P."/>
            <person name="Chakraborty T."/>
            <person name="Charbit A."/>
            <person name="Chetouani F."/>
            <person name="Couve E."/>
            <person name="de Daruvar A."/>
            <person name="Dehoux P."/>
            <person name="Domann E."/>
            <person name="Dominguez-Bernal G."/>
            <person name="Duchaud E."/>
            <person name="Durant L."/>
            <person name="Dussurget O."/>
            <person name="Entian K.-D."/>
            <person name="Fsihi H."/>
            <person name="Garcia-del Portillo F."/>
            <person name="Garrido P."/>
            <person name="Gautier L."/>
            <person name="Goebel W."/>
            <person name="Gomez-Lopez N."/>
            <person name="Hain T."/>
            <person name="Hauf J."/>
            <person name="Jackson D."/>
            <person name="Jones L.-M."/>
            <person name="Kaerst U."/>
            <person name="Kreft J."/>
            <person name="Kuhn M."/>
            <person name="Kunst F."/>
            <person name="Kurapkat G."/>
            <person name="Madueno E."/>
            <person name="Maitournam A."/>
            <person name="Mata Vicente J."/>
            <person name="Ng E."/>
            <person name="Nedjari H."/>
            <person name="Nordsiek G."/>
            <person name="Novella S."/>
            <person name="de Pablos B."/>
            <person name="Perez-Diaz J.-C."/>
            <person name="Purcell R."/>
            <person name="Remmel B."/>
            <person name="Rose M."/>
            <person name="Schlueter T."/>
            <person name="Simoes N."/>
            <person name="Tierrez A."/>
            <person name="Vazquez-Boland J.-A."/>
            <person name="Voss H."/>
            <person name="Wehland J."/>
            <person name="Cossart P."/>
        </authorList>
    </citation>
    <scope>NUCLEOTIDE SEQUENCE [LARGE SCALE GENOMIC DNA]</scope>
    <source>
        <strain>ATCC BAA-679 / EGD-e</strain>
    </source>
</reference>